<reference key="1">
    <citation type="journal article" date="1998" name="Nature">
        <title>Deciphering the biology of Mycobacterium tuberculosis from the complete genome sequence.</title>
        <authorList>
            <person name="Cole S.T."/>
            <person name="Brosch R."/>
            <person name="Parkhill J."/>
            <person name="Garnier T."/>
            <person name="Churcher C.M."/>
            <person name="Harris D.E."/>
            <person name="Gordon S.V."/>
            <person name="Eiglmeier K."/>
            <person name="Gas S."/>
            <person name="Barry C.E. III"/>
            <person name="Tekaia F."/>
            <person name="Badcock K."/>
            <person name="Basham D."/>
            <person name="Brown D."/>
            <person name="Chillingworth T."/>
            <person name="Connor R."/>
            <person name="Davies R.M."/>
            <person name="Devlin K."/>
            <person name="Feltwell T."/>
            <person name="Gentles S."/>
            <person name="Hamlin N."/>
            <person name="Holroyd S."/>
            <person name="Hornsby T."/>
            <person name="Jagels K."/>
            <person name="Krogh A."/>
            <person name="McLean J."/>
            <person name="Moule S."/>
            <person name="Murphy L.D."/>
            <person name="Oliver S."/>
            <person name="Osborne J."/>
            <person name="Quail M.A."/>
            <person name="Rajandream M.A."/>
            <person name="Rogers J."/>
            <person name="Rutter S."/>
            <person name="Seeger K."/>
            <person name="Skelton S."/>
            <person name="Squares S."/>
            <person name="Squares R."/>
            <person name="Sulston J.E."/>
            <person name="Taylor K."/>
            <person name="Whitehead S."/>
            <person name="Barrell B.G."/>
        </authorList>
    </citation>
    <scope>NUCLEOTIDE SEQUENCE [LARGE SCALE GENOMIC DNA]</scope>
    <source>
        <strain>ATCC 25618 / H37Rv</strain>
    </source>
</reference>
<reference key="2">
    <citation type="journal article" date="2003" name="Immunology">
        <title>Human T-cell responses to the RD1-encoded protein TB27.4 (Rv3878) from Mycobacterium tuberculosis.</title>
        <authorList>
            <person name="Agger E.M."/>
            <person name="Brock I."/>
            <person name="Okkels L.M."/>
            <person name="Arend S.M."/>
            <person name="Aagaard C.S."/>
            <person name="Weldingh K.N."/>
            <person name="Andersen P."/>
        </authorList>
    </citation>
    <scope>IMMUNE RESPONSE</scope>
    <source>
        <strain>ATCC 25618 / H37Rv</strain>
    </source>
</reference>
<reference key="3">
    <citation type="journal article" date="2006" name="Infect. Immun.">
        <title>Dissection of ESAT-6 system 1 of Mycobacterium tuberculosis and impact on immunogenicity and virulence.</title>
        <authorList>
            <person name="Brodin P."/>
            <person name="Majlessi L."/>
            <person name="Marsollier L."/>
            <person name="de Jonge M.I."/>
            <person name="Bottai D."/>
            <person name="Demangel C."/>
            <person name="Hinds J."/>
            <person name="Neyrolles O."/>
            <person name="Butcher P.D."/>
            <person name="Leclerc C."/>
            <person name="Cole S.T."/>
            <person name="Brosch R."/>
        </authorList>
    </citation>
    <scope>DISRUPTION PHENOTYPE</scope>
</reference>
<reference key="4">
    <citation type="journal article" date="2009" name="PLoS Pathog.">
        <title>Systematic genetic nomenclature for type VII secretion systems.</title>
        <authorList>
            <person name="Bitter W."/>
            <person name="Houben E.N."/>
            <person name="Bottai D."/>
            <person name="Brodin P."/>
            <person name="Brown E.J."/>
            <person name="Cox J.S."/>
            <person name="Derbyshire K."/>
            <person name="Fortune S.M."/>
            <person name="Gao L.Y."/>
            <person name="Liu J."/>
            <person name="Gey van Pittius N.C."/>
            <person name="Pym A.S."/>
            <person name="Rubin E.J."/>
            <person name="Sherman D.R."/>
            <person name="Cole S.T."/>
            <person name="Brosch R."/>
        </authorList>
    </citation>
    <scope>GENE NAME</scope>
</reference>
<reference key="5">
    <citation type="journal article" date="2010" name="J. Bacteriol.">
        <title>Conservation of structure and protein-protein interactions mediated by the secreted mycobacterial proteins EsxA, EsxB, and EspA.</title>
        <authorList>
            <person name="Callahan B."/>
            <person name="Nguyen K."/>
            <person name="Collins A."/>
            <person name="Valdes K."/>
            <person name="Caplow M."/>
            <person name="Crossman D.K."/>
            <person name="Steyn A.J."/>
            <person name="Eisele L."/>
            <person name="Derbyshire K.M."/>
        </authorList>
    </citation>
    <scope>SUBUNIT</scope>
    <source>
        <strain>ATCC 25618 / H37Rv</strain>
    </source>
</reference>
<reference key="6">
    <citation type="journal article" date="2011" name="Mol. Cell. Proteomics">
        <title>Proteogenomic analysis of Mycobacterium tuberculosis by high resolution mass spectrometry.</title>
        <authorList>
            <person name="Kelkar D.S."/>
            <person name="Kumar D."/>
            <person name="Kumar P."/>
            <person name="Balakrishnan L."/>
            <person name="Muthusamy B."/>
            <person name="Yadav A.K."/>
            <person name="Shrivastava P."/>
            <person name="Marimuthu A."/>
            <person name="Anand S."/>
            <person name="Sundaram H."/>
            <person name="Kingsbury R."/>
            <person name="Harsha H.C."/>
            <person name="Nair B."/>
            <person name="Prasad T.S."/>
            <person name="Chauhan D.S."/>
            <person name="Katoch K."/>
            <person name="Katoch V.M."/>
            <person name="Kumar P."/>
            <person name="Chaerkady R."/>
            <person name="Ramachandran S."/>
            <person name="Dash D."/>
            <person name="Pandey A."/>
        </authorList>
    </citation>
    <scope>IDENTIFICATION BY MASS SPECTROMETRY [LARGE SCALE ANALYSIS]</scope>
    <source>
        <strain>ATCC 25618 / H37Rv</strain>
    </source>
</reference>
<reference key="7">
    <citation type="journal article" date="2015" name="Sci. Rep.">
        <title>RD-1 encoded EspJ protein gets phosphorylated prior to affect the growth and intracellular survival of mycobacteria.</title>
        <authorList>
            <person name="Singh P.K."/>
            <person name="Saxena R."/>
            <person name="Tiwari S."/>
            <person name="Singh D.K."/>
            <person name="Singh S.K."/>
            <person name="Kumari R."/>
            <person name="Srivastava K.K."/>
        </authorList>
    </citation>
    <scope>FUNCTION</scope>
    <scope>SUBCELLULAR LOCATION</scope>
    <scope>INDUCTION</scope>
    <scope>PHOSPHORYLATION AT SER-70</scope>
    <scope>DISRUPTION PHENOTYPE</scope>
    <scope>MUTAGENESIS OF SER-70</scope>
</reference>
<comment type="function">
    <text evidence="5">Could be involved in regulation of growth and intracellular survival.</text>
</comment>
<comment type="subunit">
    <text evidence="4">Residues 76-280 interact with EsxB and an artificial EsxB-EsxA heterodimer (PubMed:19854905).</text>
</comment>
<comment type="subcellular location">
    <subcellularLocation>
        <location evidence="5">Secreted</location>
    </subcellularLocation>
</comment>
<comment type="induction">
    <text evidence="5">Induced during stationary phase.</text>
</comment>
<comment type="PTM">
    <text evidence="5">Phosphorylated at Ser-70.</text>
</comment>
<comment type="disruption phenotype">
    <text evidence="3 5">Inactivation does not abolish EsxA (ESAT-6) secretion, EsxA-specific immunogenicity and enhanced virulence (PubMed:16368961). Deletion mutants multiply more efficiently compared to wild-type strains (PubMed:26228622).</text>
</comment>
<comment type="miscellaneous">
    <text evidence="2">Elicits a prominent immune response in human tuberculosis patients. Contains several epitopes, particularly in the C-terminal region.</text>
</comment>
<dbReference type="EMBL" id="AL123456">
    <property type="protein sequence ID" value="CCP46707.1"/>
    <property type="molecule type" value="Genomic_DNA"/>
</dbReference>
<dbReference type="PIR" id="D70803">
    <property type="entry name" value="D70803"/>
</dbReference>
<dbReference type="RefSeq" id="NP_218395.1">
    <property type="nucleotide sequence ID" value="NC_000962.3"/>
</dbReference>
<dbReference type="RefSeq" id="WP_003901751.1">
    <property type="nucleotide sequence ID" value="NZ_NVQJ01000086.1"/>
</dbReference>
<dbReference type="SMR" id="P9WJC3"/>
<dbReference type="FunCoup" id="P9WJC3">
    <property type="interactions" value="2"/>
</dbReference>
<dbReference type="IntAct" id="P9WJC3">
    <property type="interactions" value="1"/>
</dbReference>
<dbReference type="STRING" id="83332.Rv3878"/>
<dbReference type="iPTMnet" id="P9WJC3"/>
<dbReference type="PaxDb" id="83332-Rv3878"/>
<dbReference type="DNASU" id="886198"/>
<dbReference type="GeneID" id="886198"/>
<dbReference type="KEGG" id="mtu:Rv3878"/>
<dbReference type="KEGG" id="mtv:RVBD_3878"/>
<dbReference type="TubercuList" id="Rv3878"/>
<dbReference type="eggNOG" id="ENOG50320XY">
    <property type="taxonomic scope" value="Bacteria"/>
</dbReference>
<dbReference type="InParanoid" id="P9WJC3"/>
<dbReference type="OrthoDB" id="4753709at2"/>
<dbReference type="Proteomes" id="UP000001584">
    <property type="component" value="Chromosome"/>
</dbReference>
<dbReference type="GO" id="GO:0005576">
    <property type="term" value="C:extracellular region"/>
    <property type="evidence" value="ECO:0007669"/>
    <property type="project" value="UniProtKB-SubCell"/>
</dbReference>
<organism>
    <name type="scientific">Mycobacterium tuberculosis (strain ATCC 25618 / H37Rv)</name>
    <dbReference type="NCBI Taxonomy" id="83332"/>
    <lineage>
        <taxon>Bacteria</taxon>
        <taxon>Bacillati</taxon>
        <taxon>Actinomycetota</taxon>
        <taxon>Actinomycetes</taxon>
        <taxon>Mycobacteriales</taxon>
        <taxon>Mycobacteriaceae</taxon>
        <taxon>Mycobacterium</taxon>
        <taxon>Mycobacterium tuberculosis complex</taxon>
    </lineage>
</organism>
<evidence type="ECO:0000256" key="1">
    <source>
        <dbReference type="SAM" id="MobiDB-lite"/>
    </source>
</evidence>
<evidence type="ECO:0000269" key="2">
    <source>
    </source>
</evidence>
<evidence type="ECO:0000269" key="3">
    <source>
    </source>
</evidence>
<evidence type="ECO:0000269" key="4">
    <source>
    </source>
</evidence>
<evidence type="ECO:0000269" key="5">
    <source>
    </source>
</evidence>
<evidence type="ECO:0000303" key="6">
    <source>
    </source>
</evidence>
<evidence type="ECO:0000303" key="7">
    <source>
    </source>
</evidence>
<evidence type="ECO:0000305" key="8"/>
<sequence>MAEPLAVDPTGLSAAAAKLAGLVFPQPPAPIAVSGTDSVVAAINETMPSIESLVSDGLPGVKAALTRTASNMNAAADVYAKTDQSLGTSLSQYAFGSSGEGLAGVASVGGQPSQATQLLSTPVSQVTTQLGETAAELAPRVVATVPQLVQLAPHAVQMSQNASPIAQTISQTAQQAAQSAQGGSGPMPAQLASAEKPATEQAEPVHEVTNDDQGDQGDVQPAEVVAAARDEGAGASPGQQPGGGVPAQAMDTGAGARPAASPLAAPVDPSTPAPSTTTTL</sequence>
<keyword id="KW-0597">Phosphoprotein</keyword>
<keyword id="KW-1185">Reference proteome</keyword>
<keyword id="KW-0964">Secreted</keyword>
<keyword id="KW-0843">Virulence</keyword>
<proteinExistence type="evidence at protein level"/>
<gene>
    <name evidence="7" type="primary">espJ</name>
    <name type="ordered locus">Rv3878</name>
</gene>
<feature type="chain" id="PRO_0000394148" description="ESX-1 secretion-associated protein EspJ">
    <location>
        <begin position="1"/>
        <end position="280"/>
    </location>
</feature>
<feature type="region of interest" description="Disordered" evidence="1">
    <location>
        <begin position="167"/>
        <end position="280"/>
    </location>
</feature>
<feature type="compositionally biased region" description="Low complexity" evidence="1">
    <location>
        <begin position="167"/>
        <end position="181"/>
    </location>
</feature>
<feature type="compositionally biased region" description="Low complexity" evidence="1">
    <location>
        <begin position="246"/>
        <end position="280"/>
    </location>
</feature>
<feature type="modified residue" description="Phosphoserine" evidence="5">
    <location>
        <position position="70"/>
    </location>
</feature>
<feature type="mutagenesis site" description="Lack of phosphorylation. Increases the growth of mycobacteria." evidence="5">
    <original>S</original>
    <variation>A</variation>
    <location>
        <position position="70"/>
    </location>
</feature>
<protein>
    <recommendedName>
        <fullName evidence="8">ESX-1 secretion-associated protein EspJ</fullName>
    </recommendedName>
    <alternativeName>
        <fullName evidence="6">TB27.4</fullName>
    </alternativeName>
</protein>
<name>ESPJ_MYCTU</name>
<accession>P9WJC3</accession>
<accession>L0TFI6</accession>
<accession>O69742</accession>
<accession>Q7D4P1</accession>